<proteinExistence type="inferred from homology"/>
<dbReference type="EC" id="1.7.1.7" evidence="1"/>
<dbReference type="EMBL" id="CU928145">
    <property type="protein sequence ID" value="CAU95986.1"/>
    <property type="molecule type" value="Genomic_DNA"/>
</dbReference>
<dbReference type="RefSeq" id="WP_001217338.1">
    <property type="nucleotide sequence ID" value="NC_011748.1"/>
</dbReference>
<dbReference type="SMR" id="B7LFX2"/>
<dbReference type="GeneID" id="93777331"/>
<dbReference type="KEGG" id="eck:EC55989_0098"/>
<dbReference type="HOGENOM" id="CLU_022552_5_3_6"/>
<dbReference type="Proteomes" id="UP000000746">
    <property type="component" value="Chromosome"/>
</dbReference>
<dbReference type="GO" id="GO:0005829">
    <property type="term" value="C:cytosol"/>
    <property type="evidence" value="ECO:0007669"/>
    <property type="project" value="TreeGrafter"/>
</dbReference>
<dbReference type="GO" id="GO:1902560">
    <property type="term" value="C:GMP reductase complex"/>
    <property type="evidence" value="ECO:0007669"/>
    <property type="project" value="InterPro"/>
</dbReference>
<dbReference type="GO" id="GO:0003920">
    <property type="term" value="F:GMP reductase activity"/>
    <property type="evidence" value="ECO:0007669"/>
    <property type="project" value="UniProtKB-UniRule"/>
</dbReference>
<dbReference type="GO" id="GO:0046872">
    <property type="term" value="F:metal ion binding"/>
    <property type="evidence" value="ECO:0007669"/>
    <property type="project" value="UniProtKB-KW"/>
</dbReference>
<dbReference type="GO" id="GO:0006163">
    <property type="term" value="P:purine nucleotide metabolic process"/>
    <property type="evidence" value="ECO:0007669"/>
    <property type="project" value="UniProtKB-UniRule"/>
</dbReference>
<dbReference type="CDD" id="cd00381">
    <property type="entry name" value="IMPDH"/>
    <property type="match status" value="1"/>
</dbReference>
<dbReference type="FunFam" id="3.20.20.70:FF:000012">
    <property type="entry name" value="GMP reductase"/>
    <property type="match status" value="1"/>
</dbReference>
<dbReference type="Gene3D" id="3.20.20.70">
    <property type="entry name" value="Aldolase class I"/>
    <property type="match status" value="1"/>
</dbReference>
<dbReference type="HAMAP" id="MF_00596">
    <property type="entry name" value="GMP_reduct_type1"/>
    <property type="match status" value="1"/>
</dbReference>
<dbReference type="InterPro" id="IPR013785">
    <property type="entry name" value="Aldolase_TIM"/>
</dbReference>
<dbReference type="InterPro" id="IPR050139">
    <property type="entry name" value="GMP_reductase"/>
</dbReference>
<dbReference type="InterPro" id="IPR005993">
    <property type="entry name" value="GMPR"/>
</dbReference>
<dbReference type="InterPro" id="IPR015875">
    <property type="entry name" value="IMP_DH/GMP_Rdtase_CS"/>
</dbReference>
<dbReference type="InterPro" id="IPR001093">
    <property type="entry name" value="IMP_DH_GMPRt"/>
</dbReference>
<dbReference type="NCBIfam" id="TIGR01305">
    <property type="entry name" value="GMP_reduct_1"/>
    <property type="match status" value="1"/>
</dbReference>
<dbReference type="NCBIfam" id="NF003470">
    <property type="entry name" value="PRK05096.1"/>
    <property type="match status" value="1"/>
</dbReference>
<dbReference type="PANTHER" id="PTHR43170">
    <property type="entry name" value="GMP REDUCTASE"/>
    <property type="match status" value="1"/>
</dbReference>
<dbReference type="PANTHER" id="PTHR43170:SF5">
    <property type="entry name" value="GMP REDUCTASE"/>
    <property type="match status" value="1"/>
</dbReference>
<dbReference type="Pfam" id="PF00478">
    <property type="entry name" value="IMPDH"/>
    <property type="match status" value="1"/>
</dbReference>
<dbReference type="PIRSF" id="PIRSF000235">
    <property type="entry name" value="GMP_reductase"/>
    <property type="match status" value="1"/>
</dbReference>
<dbReference type="SMART" id="SM01240">
    <property type="entry name" value="IMPDH"/>
    <property type="match status" value="1"/>
</dbReference>
<dbReference type="SUPFAM" id="SSF51412">
    <property type="entry name" value="Inosine monophosphate dehydrogenase (IMPDH)"/>
    <property type="match status" value="1"/>
</dbReference>
<dbReference type="PROSITE" id="PS00487">
    <property type="entry name" value="IMP_DH_GMP_RED"/>
    <property type="match status" value="1"/>
</dbReference>
<protein>
    <recommendedName>
        <fullName evidence="1">GMP reductase</fullName>
        <ecNumber evidence="1">1.7.1.7</ecNumber>
    </recommendedName>
    <alternativeName>
        <fullName evidence="1">Guanosine 5'-monophosphate oxidoreductase</fullName>
        <shortName evidence="1">Guanosine monophosphate reductase</shortName>
    </alternativeName>
</protein>
<evidence type="ECO:0000255" key="1">
    <source>
        <dbReference type="HAMAP-Rule" id="MF_00596"/>
    </source>
</evidence>
<organism>
    <name type="scientific">Escherichia coli (strain 55989 / EAEC)</name>
    <dbReference type="NCBI Taxonomy" id="585055"/>
    <lineage>
        <taxon>Bacteria</taxon>
        <taxon>Pseudomonadati</taxon>
        <taxon>Pseudomonadota</taxon>
        <taxon>Gammaproteobacteria</taxon>
        <taxon>Enterobacterales</taxon>
        <taxon>Enterobacteriaceae</taxon>
        <taxon>Escherichia</taxon>
    </lineage>
</organism>
<reference key="1">
    <citation type="journal article" date="2009" name="PLoS Genet.">
        <title>Organised genome dynamics in the Escherichia coli species results in highly diverse adaptive paths.</title>
        <authorList>
            <person name="Touchon M."/>
            <person name="Hoede C."/>
            <person name="Tenaillon O."/>
            <person name="Barbe V."/>
            <person name="Baeriswyl S."/>
            <person name="Bidet P."/>
            <person name="Bingen E."/>
            <person name="Bonacorsi S."/>
            <person name="Bouchier C."/>
            <person name="Bouvet O."/>
            <person name="Calteau A."/>
            <person name="Chiapello H."/>
            <person name="Clermont O."/>
            <person name="Cruveiller S."/>
            <person name="Danchin A."/>
            <person name="Diard M."/>
            <person name="Dossat C."/>
            <person name="Karoui M.E."/>
            <person name="Frapy E."/>
            <person name="Garry L."/>
            <person name="Ghigo J.M."/>
            <person name="Gilles A.M."/>
            <person name="Johnson J."/>
            <person name="Le Bouguenec C."/>
            <person name="Lescat M."/>
            <person name="Mangenot S."/>
            <person name="Martinez-Jehanne V."/>
            <person name="Matic I."/>
            <person name="Nassif X."/>
            <person name="Oztas S."/>
            <person name="Petit M.A."/>
            <person name="Pichon C."/>
            <person name="Rouy Z."/>
            <person name="Ruf C.S."/>
            <person name="Schneider D."/>
            <person name="Tourret J."/>
            <person name="Vacherie B."/>
            <person name="Vallenet D."/>
            <person name="Medigue C."/>
            <person name="Rocha E.P.C."/>
            <person name="Denamur E."/>
        </authorList>
    </citation>
    <scope>NUCLEOTIDE SEQUENCE [LARGE SCALE GENOMIC DNA]</scope>
    <source>
        <strain>55989 / EAEC</strain>
    </source>
</reference>
<name>GUAC_ECO55</name>
<feature type="chain" id="PRO_1000146986" description="GMP reductase">
    <location>
        <begin position="1"/>
        <end position="347"/>
    </location>
</feature>
<feature type="active site" description="Thioimidate intermediate" evidence="1">
    <location>
        <position position="186"/>
    </location>
</feature>
<feature type="binding site" evidence="1">
    <location>
        <begin position="108"/>
        <end position="131"/>
    </location>
    <ligand>
        <name>NADP(+)</name>
        <dbReference type="ChEBI" id="CHEBI:58349"/>
    </ligand>
</feature>
<feature type="binding site" evidence="1">
    <location>
        <position position="181"/>
    </location>
    <ligand>
        <name>K(+)</name>
        <dbReference type="ChEBI" id="CHEBI:29103"/>
    </ligand>
</feature>
<feature type="binding site" evidence="1">
    <location>
        <position position="183"/>
    </location>
    <ligand>
        <name>K(+)</name>
        <dbReference type="ChEBI" id="CHEBI:29103"/>
    </ligand>
</feature>
<feature type="binding site" evidence="1">
    <location>
        <begin position="216"/>
        <end position="239"/>
    </location>
    <ligand>
        <name>NADP(+)</name>
        <dbReference type="ChEBI" id="CHEBI:58349"/>
    </ligand>
</feature>
<accession>B7LFX2</accession>
<gene>
    <name evidence="1" type="primary">guaC</name>
    <name type="ordered locus">EC55989_0098</name>
</gene>
<comment type="function">
    <text evidence="1">Catalyzes the irreversible NADPH-dependent deamination of GMP to IMP. It functions in the conversion of nucleobase, nucleoside and nucleotide derivatives of G to A nucleotides, and in maintaining the intracellular balance of A and G nucleotides.</text>
</comment>
<comment type="catalytic activity">
    <reaction evidence="1">
        <text>IMP + NH4(+) + NADP(+) = GMP + NADPH + 2 H(+)</text>
        <dbReference type="Rhea" id="RHEA:17185"/>
        <dbReference type="ChEBI" id="CHEBI:15378"/>
        <dbReference type="ChEBI" id="CHEBI:28938"/>
        <dbReference type="ChEBI" id="CHEBI:57783"/>
        <dbReference type="ChEBI" id="CHEBI:58053"/>
        <dbReference type="ChEBI" id="CHEBI:58115"/>
        <dbReference type="ChEBI" id="CHEBI:58349"/>
        <dbReference type="EC" id="1.7.1.7"/>
    </reaction>
</comment>
<comment type="subunit">
    <text evidence="1">Homotetramer.</text>
</comment>
<comment type="similarity">
    <text evidence="1">Belongs to the IMPDH/GMPR family. GuaC type 1 subfamily.</text>
</comment>
<keyword id="KW-0479">Metal-binding</keyword>
<keyword id="KW-0521">NADP</keyword>
<keyword id="KW-0560">Oxidoreductase</keyword>
<keyword id="KW-0630">Potassium</keyword>
<keyword id="KW-1185">Reference proteome</keyword>
<sequence>MRIEEDLKLGFKDVLIRPKRSTLKSRSDVELERQFTFKHSGQSWSGVPIIAANMDTVGTFSMASALASFDILTAVHKHYSVEEWQAFINNSSADVLKHVMVSTGTSDADFEKTKQILDLNPALNFVCIDVANGYSEHFVQFVAKAREAWPTKTICAGNVVTGEMCEELILSGADIVKVGIGPGSVCTTRVKTGVGYPQLSAVIECADAAHGLGGMIVSDGGCTTPGDVAKAFGGGADFVMLGGMLAGHEESGGRIVEENGEKFMLFYGMSSESAMKRHVGGVAEYRAAEGKTVKLPLRGPVENTARDILGGLRSACTYVGASRLKELTKRTTFIRVQEQENRIFNNL</sequence>